<comment type="function">
    <text evidence="1">Channel that opens in response to stretch forces in the membrane lipid bilayer. May participate in the regulation of osmotic pressure changes within the cell.</text>
</comment>
<comment type="subunit">
    <text evidence="1">Homopentamer.</text>
</comment>
<comment type="subcellular location">
    <subcellularLocation>
        <location evidence="1">Cell inner membrane</location>
        <topology evidence="1">Multi-pass membrane protein</topology>
    </subcellularLocation>
</comment>
<comment type="similarity">
    <text evidence="1">Belongs to the MscL family.</text>
</comment>
<comment type="sequence caution" evidence="2">
    <conflict type="erroneous initiation">
        <sequence resource="EMBL-CDS" id="AAU38803"/>
    </conflict>
</comment>
<keyword id="KW-0997">Cell inner membrane</keyword>
<keyword id="KW-1003">Cell membrane</keyword>
<keyword id="KW-0407">Ion channel</keyword>
<keyword id="KW-0406">Ion transport</keyword>
<keyword id="KW-0472">Membrane</keyword>
<keyword id="KW-0812">Transmembrane</keyword>
<keyword id="KW-1133">Transmembrane helix</keyword>
<keyword id="KW-0813">Transport</keyword>
<proteinExistence type="inferred from homology"/>
<sequence length="128" mass="13930">MSFMKEFREFAMRGNVVDMAVGVIIGGAFGKIVSSLVGDVVMPVLGILTGGVDFKDLKFVLAEAVGETPAVTLNYGLFIQNVFDFIIIAFAIFMMVKGINKLKKPVEEAPKGPTSEELLSEIRDLLKK</sequence>
<evidence type="ECO:0000255" key="1">
    <source>
        <dbReference type="HAMAP-Rule" id="MF_00115"/>
    </source>
</evidence>
<evidence type="ECO:0000305" key="2"/>
<gene>
    <name evidence="1" type="primary">mscL</name>
    <name type="ordered locus">MS2196</name>
</gene>
<protein>
    <recommendedName>
        <fullName evidence="1">Large-conductance mechanosensitive channel</fullName>
    </recommendedName>
</protein>
<name>MSCL_MANSM</name>
<dbReference type="EMBL" id="AE016827">
    <property type="protein sequence ID" value="AAU38803.1"/>
    <property type="status" value="ALT_INIT"/>
    <property type="molecule type" value="Genomic_DNA"/>
</dbReference>
<dbReference type="RefSeq" id="WP_041640079.1">
    <property type="nucleotide sequence ID" value="NC_006300.1"/>
</dbReference>
<dbReference type="SMR" id="Q65QF7"/>
<dbReference type="STRING" id="221988.MS2196"/>
<dbReference type="KEGG" id="msu:MS2196"/>
<dbReference type="eggNOG" id="COG1970">
    <property type="taxonomic scope" value="Bacteria"/>
</dbReference>
<dbReference type="HOGENOM" id="CLU_095787_0_0_6"/>
<dbReference type="OrthoDB" id="9810350at2"/>
<dbReference type="Proteomes" id="UP000000607">
    <property type="component" value="Chromosome"/>
</dbReference>
<dbReference type="GO" id="GO:0005886">
    <property type="term" value="C:plasma membrane"/>
    <property type="evidence" value="ECO:0007669"/>
    <property type="project" value="UniProtKB-SubCell"/>
</dbReference>
<dbReference type="GO" id="GO:0008381">
    <property type="term" value="F:mechanosensitive monoatomic ion channel activity"/>
    <property type="evidence" value="ECO:0007669"/>
    <property type="project" value="UniProtKB-UniRule"/>
</dbReference>
<dbReference type="FunFam" id="1.10.1200.120:FF:000001">
    <property type="entry name" value="Large-conductance mechanosensitive channel"/>
    <property type="match status" value="1"/>
</dbReference>
<dbReference type="Gene3D" id="1.10.1200.120">
    <property type="entry name" value="Large-conductance mechanosensitive channel, MscL, domain 1"/>
    <property type="match status" value="1"/>
</dbReference>
<dbReference type="HAMAP" id="MF_00115">
    <property type="entry name" value="MscL"/>
    <property type="match status" value="1"/>
</dbReference>
<dbReference type="InterPro" id="IPR019823">
    <property type="entry name" value="Mechanosensitive_channel_CS"/>
</dbReference>
<dbReference type="InterPro" id="IPR001185">
    <property type="entry name" value="MS_channel"/>
</dbReference>
<dbReference type="InterPro" id="IPR037673">
    <property type="entry name" value="MSC/AndL"/>
</dbReference>
<dbReference type="InterPro" id="IPR036019">
    <property type="entry name" value="MscL_channel"/>
</dbReference>
<dbReference type="NCBIfam" id="TIGR00220">
    <property type="entry name" value="mscL"/>
    <property type="match status" value="1"/>
</dbReference>
<dbReference type="NCBIfam" id="NF001843">
    <property type="entry name" value="PRK00567.1-4"/>
    <property type="match status" value="1"/>
</dbReference>
<dbReference type="PANTHER" id="PTHR30266:SF2">
    <property type="entry name" value="LARGE-CONDUCTANCE MECHANOSENSITIVE CHANNEL"/>
    <property type="match status" value="1"/>
</dbReference>
<dbReference type="PANTHER" id="PTHR30266">
    <property type="entry name" value="MECHANOSENSITIVE CHANNEL MSCL"/>
    <property type="match status" value="1"/>
</dbReference>
<dbReference type="Pfam" id="PF01741">
    <property type="entry name" value="MscL"/>
    <property type="match status" value="1"/>
</dbReference>
<dbReference type="PRINTS" id="PR01264">
    <property type="entry name" value="MECHCHANNEL"/>
</dbReference>
<dbReference type="SUPFAM" id="SSF81330">
    <property type="entry name" value="Gated mechanosensitive channel"/>
    <property type="match status" value="1"/>
</dbReference>
<dbReference type="PROSITE" id="PS01327">
    <property type="entry name" value="MSCL"/>
    <property type="match status" value="1"/>
</dbReference>
<feature type="chain" id="PRO_0000238012" description="Large-conductance mechanosensitive channel">
    <location>
        <begin position="1"/>
        <end position="128"/>
    </location>
</feature>
<feature type="transmembrane region" description="Helical" evidence="1">
    <location>
        <begin position="10"/>
        <end position="30"/>
    </location>
</feature>
<feature type="transmembrane region" description="Helical" evidence="1">
    <location>
        <begin position="76"/>
        <end position="96"/>
    </location>
</feature>
<accession>Q65QF7</accession>
<organism>
    <name type="scientific">Mannheimia succiniciproducens (strain KCTC 0769BP / MBEL55E)</name>
    <dbReference type="NCBI Taxonomy" id="221988"/>
    <lineage>
        <taxon>Bacteria</taxon>
        <taxon>Pseudomonadati</taxon>
        <taxon>Pseudomonadota</taxon>
        <taxon>Gammaproteobacteria</taxon>
        <taxon>Pasteurellales</taxon>
        <taxon>Pasteurellaceae</taxon>
        <taxon>Basfia</taxon>
    </lineage>
</organism>
<reference key="1">
    <citation type="journal article" date="2004" name="Nat. Biotechnol.">
        <title>The genome sequence of the capnophilic rumen bacterium Mannheimia succiniciproducens.</title>
        <authorList>
            <person name="Hong S.H."/>
            <person name="Kim J.S."/>
            <person name="Lee S.Y."/>
            <person name="In Y.H."/>
            <person name="Choi S.S."/>
            <person name="Rih J.-K."/>
            <person name="Kim C.H."/>
            <person name="Jeong H."/>
            <person name="Hur C.G."/>
            <person name="Kim J.J."/>
        </authorList>
    </citation>
    <scope>NUCLEOTIDE SEQUENCE [LARGE SCALE GENOMIC DNA]</scope>
    <source>
        <strain>KCTC 0769BP / MBEL55E</strain>
    </source>
</reference>